<comment type="function">
    <text evidence="1">Component of the BLOC-1 complex, a complex that is required for normal biogenesis of lysosome-related organelles (LRO), such as platelet dense granules and melanosomes. In concert with the AP-3 complex, the BLOC-1 complex is required to target membrane protein cargos into vesicles assembled at cell bodies for delivery into neurites and nerve terminals. The BLOC-1 complex, in association with SNARE proteins, is also proposed to be involved in neurite extension. Plays a role in intracellular vesicle trafficking (By similarity).</text>
</comment>
<comment type="subunit">
    <text evidence="1">Component of the biogenesis of lysosome-related organelles complex 1 (BLOC-1) composed of BLOC1S1, BLOC1S2, BLOC1S3, BLOC1S4, BLOC1S5, BLOC1S6, DTNBP1/BLOC1S7 and SNAPIN/BLOC1S8. Octamer composed of one copy each BLOC1S1, BLOC1S2, BLOC1S3, BLOC1S4, BLOC1S5, BLOC1S6, DTNBP1/BLOC1S7 and SNAPIN/BLOC1S8. The BLOC-1 complex associates with the AP-3 protein complex and membrane protein cargos. Interacts with BLOC1S4, BLOC1S6, DTNBP1/BLOC1S7 and PI4K2A (By similarity).</text>
</comment>
<comment type="similarity">
    <text evidence="5">Belongs to the BLOC1S5 family.</text>
</comment>
<protein>
    <recommendedName>
        <fullName>Biogenesis of lysosome-related organelles complex 1 subunit 5</fullName>
        <shortName>BLOC-1 subunit 5</shortName>
    </recommendedName>
    <alternativeName>
        <fullName>Protein Muted homolog</fullName>
    </alternativeName>
</protein>
<organism>
    <name type="scientific">Sus scrofa</name>
    <name type="common">Pig</name>
    <dbReference type="NCBI Taxonomy" id="9823"/>
    <lineage>
        <taxon>Eukaryota</taxon>
        <taxon>Metazoa</taxon>
        <taxon>Chordata</taxon>
        <taxon>Craniata</taxon>
        <taxon>Vertebrata</taxon>
        <taxon>Euteleostomi</taxon>
        <taxon>Mammalia</taxon>
        <taxon>Eutheria</taxon>
        <taxon>Laurasiatheria</taxon>
        <taxon>Artiodactyla</taxon>
        <taxon>Suina</taxon>
        <taxon>Suidae</taxon>
        <taxon>Sus</taxon>
    </lineage>
</organism>
<name>BL1S5_PIG</name>
<evidence type="ECO:0000250" key="1"/>
<evidence type="ECO:0000250" key="2">
    <source>
        <dbReference type="UniProtKB" id="Q8TDH9"/>
    </source>
</evidence>
<evidence type="ECO:0000255" key="3"/>
<evidence type="ECO:0000256" key="4">
    <source>
        <dbReference type="SAM" id="MobiDB-lite"/>
    </source>
</evidence>
<evidence type="ECO:0000305" key="5"/>
<accession>A5A777</accession>
<feature type="initiator methionine" description="Removed" evidence="2">
    <location>
        <position position="1"/>
    </location>
</feature>
<feature type="chain" id="PRO_0000330834" description="Biogenesis of lysosome-related organelles complex 1 subunit 5">
    <location>
        <begin position="2"/>
        <end position="191"/>
    </location>
</feature>
<feature type="region of interest" description="Disordered" evidence="4">
    <location>
        <begin position="1"/>
        <end position="32"/>
    </location>
</feature>
<feature type="coiled-coil region" evidence="3">
    <location>
        <begin position="160"/>
        <end position="191"/>
    </location>
</feature>
<feature type="modified residue" description="N-acetylserine" evidence="2">
    <location>
        <position position="2"/>
    </location>
</feature>
<dbReference type="EMBL" id="AB271947">
    <property type="protein sequence ID" value="BAF62322.1"/>
    <property type="molecule type" value="mRNA"/>
</dbReference>
<dbReference type="RefSeq" id="NP_001092061.1">
    <property type="nucleotide sequence ID" value="NM_001098591.1"/>
</dbReference>
<dbReference type="SMR" id="A5A777"/>
<dbReference type="FunCoup" id="A5A777">
    <property type="interactions" value="1656"/>
</dbReference>
<dbReference type="STRING" id="9823.ENSSSCP00000041281"/>
<dbReference type="PaxDb" id="9823-ENSSSCP00000022287"/>
<dbReference type="GeneID" id="100049677"/>
<dbReference type="KEGG" id="ssc:100049677"/>
<dbReference type="CTD" id="63915"/>
<dbReference type="eggNOG" id="ENOG502S2QH">
    <property type="taxonomic scope" value="Eukaryota"/>
</dbReference>
<dbReference type="InParanoid" id="A5A777"/>
<dbReference type="OrthoDB" id="18964at2759"/>
<dbReference type="Proteomes" id="UP000008227">
    <property type="component" value="Unplaced"/>
</dbReference>
<dbReference type="Proteomes" id="UP000314985">
    <property type="component" value="Unplaced"/>
</dbReference>
<dbReference type="Proteomes" id="UP000694570">
    <property type="component" value="Unplaced"/>
</dbReference>
<dbReference type="Proteomes" id="UP000694571">
    <property type="component" value="Unplaced"/>
</dbReference>
<dbReference type="Proteomes" id="UP000694720">
    <property type="component" value="Unplaced"/>
</dbReference>
<dbReference type="Proteomes" id="UP000694722">
    <property type="component" value="Unplaced"/>
</dbReference>
<dbReference type="Proteomes" id="UP000694723">
    <property type="component" value="Unplaced"/>
</dbReference>
<dbReference type="Proteomes" id="UP000694724">
    <property type="component" value="Unplaced"/>
</dbReference>
<dbReference type="Proteomes" id="UP000694725">
    <property type="component" value="Unplaced"/>
</dbReference>
<dbReference type="Proteomes" id="UP000694726">
    <property type="component" value="Unplaced"/>
</dbReference>
<dbReference type="Proteomes" id="UP000694727">
    <property type="component" value="Unplaced"/>
</dbReference>
<dbReference type="Proteomes" id="UP000694728">
    <property type="component" value="Unplaced"/>
</dbReference>
<dbReference type="GO" id="GO:1904115">
    <property type="term" value="C:axon cytoplasm"/>
    <property type="evidence" value="ECO:0007669"/>
    <property type="project" value="GOC"/>
</dbReference>
<dbReference type="GO" id="GO:0031083">
    <property type="term" value="C:BLOC-1 complex"/>
    <property type="evidence" value="ECO:0000250"/>
    <property type="project" value="UniProtKB"/>
</dbReference>
<dbReference type="GO" id="GO:0030133">
    <property type="term" value="C:transport vesicle"/>
    <property type="evidence" value="ECO:0000250"/>
    <property type="project" value="UniProtKB"/>
</dbReference>
<dbReference type="GO" id="GO:0008089">
    <property type="term" value="P:anterograde axonal transport"/>
    <property type="evidence" value="ECO:0000250"/>
    <property type="project" value="UniProtKB"/>
</dbReference>
<dbReference type="GO" id="GO:0048490">
    <property type="term" value="P:anterograde synaptic vesicle transport"/>
    <property type="evidence" value="ECO:0000250"/>
    <property type="project" value="UniProtKB"/>
</dbReference>
<dbReference type="GO" id="GO:0035646">
    <property type="term" value="P:endosome to melanosome transport"/>
    <property type="evidence" value="ECO:0000250"/>
    <property type="project" value="UniProtKB"/>
</dbReference>
<dbReference type="GO" id="GO:0032402">
    <property type="term" value="P:melanosome transport"/>
    <property type="evidence" value="ECO:0000250"/>
    <property type="project" value="UniProtKB"/>
</dbReference>
<dbReference type="GO" id="GO:0031175">
    <property type="term" value="P:neuron projection development"/>
    <property type="evidence" value="ECO:0000250"/>
    <property type="project" value="UniProtKB"/>
</dbReference>
<dbReference type="GO" id="GO:0050942">
    <property type="term" value="P:positive regulation of pigment cell differentiation"/>
    <property type="evidence" value="ECO:0000250"/>
    <property type="project" value="UniProtKB"/>
</dbReference>
<dbReference type="InterPro" id="IPR017243">
    <property type="entry name" value="Bloc1s5"/>
</dbReference>
<dbReference type="PANTHER" id="PTHR31784">
    <property type="entry name" value="BIOGENESIS OF LYSOSOME-RELATED ORGANELLES COMPLEX 1 SUBUNIT 5"/>
    <property type="match status" value="1"/>
</dbReference>
<dbReference type="PANTHER" id="PTHR31784:SF2">
    <property type="entry name" value="BIOGENESIS OF LYSOSOME-RELATED ORGANELLES COMPLEX 1 SUBUNIT 5"/>
    <property type="match status" value="1"/>
</dbReference>
<dbReference type="Pfam" id="PF14942">
    <property type="entry name" value="Muted"/>
    <property type="match status" value="1"/>
</dbReference>
<dbReference type="PIRSF" id="PIRSF037610">
    <property type="entry name" value="BLOC-1_complex_muted_subunit"/>
    <property type="match status" value="1"/>
</dbReference>
<gene>
    <name type="primary">BLOC1S5</name>
    <name type="synonym">MUTED</name>
</gene>
<reference key="1">
    <citation type="submission" date="2006-09" db="EMBL/GenBank/DDBJ databases">
        <title>Sequences and genetic variations of fourty-four porcine coat color related genes.</title>
        <authorList>
            <person name="Okumura N."/>
            <person name="Matsumoto T."/>
            <person name="Hamasima N."/>
            <person name="Uenishi H."/>
            <person name="Ogawa T."/>
            <person name="Komatsuda A."/>
            <person name="Fukudome N."/>
            <person name="Ide H."/>
            <person name="Suzuki A."/>
            <person name="Kojima C."/>
            <person name="Awata T."/>
        </authorList>
    </citation>
    <scope>NUCLEOTIDE SEQUENCE [MRNA]</scope>
    <source>
        <strain>Landrace</strain>
    </source>
</reference>
<sequence>MSGGGTETPTGCEAPSGGGGGGGRKRDSLGTTSSPAHLIIKDLGEIHSRLLDHRPVIQGETRYFVKEFEEKRGLREMRALENLKNMIHETNEHTLPTCTETMEDSLSHVLQRLQAATASVCRLQQREQERKKVHNDHLIASEKQHIMQWEDFMKEQHSKQADVDEEHRKAMEKLKEQYAEMEKDLAKFSTF</sequence>
<proteinExistence type="evidence at transcript level"/>
<keyword id="KW-0007">Acetylation</keyword>
<keyword id="KW-0175">Coiled coil</keyword>
<keyword id="KW-1185">Reference proteome</keyword>